<comment type="function">
    <text evidence="1">Has an important function as a repair enzyme for proteins that have been inactivated by oxidation. Catalyzes the reversible oxidation-reduction of methionine sulfoxide in proteins to methionine.</text>
</comment>
<comment type="catalytic activity">
    <reaction evidence="1">
        <text>L-methionyl-[protein] + [thioredoxin]-disulfide + H2O = L-methionyl-(S)-S-oxide-[protein] + [thioredoxin]-dithiol</text>
        <dbReference type="Rhea" id="RHEA:14217"/>
        <dbReference type="Rhea" id="RHEA-COMP:10698"/>
        <dbReference type="Rhea" id="RHEA-COMP:10700"/>
        <dbReference type="Rhea" id="RHEA-COMP:12313"/>
        <dbReference type="Rhea" id="RHEA-COMP:12315"/>
        <dbReference type="ChEBI" id="CHEBI:15377"/>
        <dbReference type="ChEBI" id="CHEBI:16044"/>
        <dbReference type="ChEBI" id="CHEBI:29950"/>
        <dbReference type="ChEBI" id="CHEBI:44120"/>
        <dbReference type="ChEBI" id="CHEBI:50058"/>
        <dbReference type="EC" id="1.8.4.11"/>
    </reaction>
</comment>
<comment type="catalytic activity">
    <reaction evidence="1">
        <text>[thioredoxin]-disulfide + L-methionine + H2O = L-methionine (S)-S-oxide + [thioredoxin]-dithiol</text>
        <dbReference type="Rhea" id="RHEA:19993"/>
        <dbReference type="Rhea" id="RHEA-COMP:10698"/>
        <dbReference type="Rhea" id="RHEA-COMP:10700"/>
        <dbReference type="ChEBI" id="CHEBI:15377"/>
        <dbReference type="ChEBI" id="CHEBI:29950"/>
        <dbReference type="ChEBI" id="CHEBI:50058"/>
        <dbReference type="ChEBI" id="CHEBI:57844"/>
        <dbReference type="ChEBI" id="CHEBI:58772"/>
        <dbReference type="EC" id="1.8.4.11"/>
    </reaction>
</comment>
<comment type="similarity">
    <text evidence="1">Belongs to the MsrA Met sulfoxide reductase family.</text>
</comment>
<feature type="chain" id="PRO_1000068362" description="Peptide methionine sulfoxide reductase MsrA">
    <location>
        <begin position="1"/>
        <end position="212"/>
    </location>
</feature>
<feature type="active site" evidence="1">
    <location>
        <position position="52"/>
    </location>
</feature>
<protein>
    <recommendedName>
        <fullName evidence="1">Peptide methionine sulfoxide reductase MsrA</fullName>
        <shortName evidence="1">Protein-methionine-S-oxide reductase</shortName>
        <ecNumber evidence="1">1.8.4.11</ecNumber>
    </recommendedName>
    <alternativeName>
        <fullName evidence="1">Peptide-methionine (S)-S-oxide reductase</fullName>
        <shortName evidence="1">Peptide Met(O) reductase</shortName>
    </alternativeName>
</protein>
<reference key="1">
    <citation type="journal article" date="2005" name="Nucleic Acids Res.">
        <title>Genome dynamics and diversity of Shigella species, the etiologic agents of bacillary dysentery.</title>
        <authorList>
            <person name="Yang F."/>
            <person name="Yang J."/>
            <person name="Zhang X."/>
            <person name="Chen L."/>
            <person name="Jiang Y."/>
            <person name="Yan Y."/>
            <person name="Tang X."/>
            <person name="Wang J."/>
            <person name="Xiong Z."/>
            <person name="Dong J."/>
            <person name="Xue Y."/>
            <person name="Zhu Y."/>
            <person name="Xu X."/>
            <person name="Sun L."/>
            <person name="Chen S."/>
            <person name="Nie H."/>
            <person name="Peng J."/>
            <person name="Xu J."/>
            <person name="Wang Y."/>
            <person name="Yuan Z."/>
            <person name="Wen Y."/>
            <person name="Yao Z."/>
            <person name="Shen Y."/>
            <person name="Qiang B."/>
            <person name="Hou Y."/>
            <person name="Yu J."/>
            <person name="Jin Q."/>
        </authorList>
    </citation>
    <scope>NUCLEOTIDE SEQUENCE [LARGE SCALE GENOMIC DNA]</scope>
    <source>
        <strain>Ss046</strain>
    </source>
</reference>
<organism>
    <name type="scientific">Shigella sonnei (strain Ss046)</name>
    <dbReference type="NCBI Taxonomy" id="300269"/>
    <lineage>
        <taxon>Bacteria</taxon>
        <taxon>Pseudomonadati</taxon>
        <taxon>Pseudomonadota</taxon>
        <taxon>Gammaproteobacteria</taxon>
        <taxon>Enterobacterales</taxon>
        <taxon>Enterobacteriaceae</taxon>
        <taxon>Shigella</taxon>
    </lineage>
</organism>
<name>MSRA_SHISS</name>
<dbReference type="EC" id="1.8.4.11" evidence="1"/>
<dbReference type="EMBL" id="CP000038">
    <property type="protein sequence ID" value="AAZ90884.1"/>
    <property type="molecule type" value="Genomic_DNA"/>
</dbReference>
<dbReference type="RefSeq" id="WP_001295196.1">
    <property type="nucleotide sequence ID" value="NC_007384.1"/>
</dbReference>
<dbReference type="SMR" id="Q3YUC8"/>
<dbReference type="GeneID" id="93777602"/>
<dbReference type="KEGG" id="ssn:SSON_4404"/>
<dbReference type="HOGENOM" id="CLU_031040_10_3_6"/>
<dbReference type="Proteomes" id="UP000002529">
    <property type="component" value="Chromosome"/>
</dbReference>
<dbReference type="GO" id="GO:0005737">
    <property type="term" value="C:cytoplasm"/>
    <property type="evidence" value="ECO:0007669"/>
    <property type="project" value="TreeGrafter"/>
</dbReference>
<dbReference type="GO" id="GO:0036456">
    <property type="term" value="F:L-methionine-(S)-S-oxide reductase activity"/>
    <property type="evidence" value="ECO:0007669"/>
    <property type="project" value="TreeGrafter"/>
</dbReference>
<dbReference type="GO" id="GO:0008113">
    <property type="term" value="F:peptide-methionine (S)-S-oxide reductase activity"/>
    <property type="evidence" value="ECO:0007669"/>
    <property type="project" value="UniProtKB-UniRule"/>
</dbReference>
<dbReference type="GO" id="GO:0034599">
    <property type="term" value="P:cellular response to oxidative stress"/>
    <property type="evidence" value="ECO:0007669"/>
    <property type="project" value="TreeGrafter"/>
</dbReference>
<dbReference type="GO" id="GO:0036211">
    <property type="term" value="P:protein modification process"/>
    <property type="evidence" value="ECO:0007669"/>
    <property type="project" value="UniProtKB-UniRule"/>
</dbReference>
<dbReference type="FunFam" id="3.30.1060.10:FF:000001">
    <property type="entry name" value="Peptide methionine sulfoxide reductase MsrA"/>
    <property type="match status" value="1"/>
</dbReference>
<dbReference type="Gene3D" id="3.30.1060.10">
    <property type="entry name" value="Peptide methionine sulphoxide reductase MsrA"/>
    <property type="match status" value="1"/>
</dbReference>
<dbReference type="HAMAP" id="MF_01401">
    <property type="entry name" value="MsrA"/>
    <property type="match status" value="1"/>
</dbReference>
<dbReference type="InterPro" id="IPR002569">
    <property type="entry name" value="Met_Sox_Rdtase_MsrA_dom"/>
</dbReference>
<dbReference type="InterPro" id="IPR036509">
    <property type="entry name" value="Met_Sox_Rdtase_MsrA_sf"/>
</dbReference>
<dbReference type="InterPro" id="IPR050162">
    <property type="entry name" value="MsrA_MetSO_reductase"/>
</dbReference>
<dbReference type="NCBIfam" id="TIGR00401">
    <property type="entry name" value="msrA"/>
    <property type="match status" value="1"/>
</dbReference>
<dbReference type="PANTHER" id="PTHR42799">
    <property type="entry name" value="MITOCHONDRIAL PEPTIDE METHIONINE SULFOXIDE REDUCTASE"/>
    <property type="match status" value="1"/>
</dbReference>
<dbReference type="PANTHER" id="PTHR42799:SF2">
    <property type="entry name" value="MITOCHONDRIAL PEPTIDE METHIONINE SULFOXIDE REDUCTASE"/>
    <property type="match status" value="1"/>
</dbReference>
<dbReference type="Pfam" id="PF01625">
    <property type="entry name" value="PMSR"/>
    <property type="match status" value="1"/>
</dbReference>
<dbReference type="SUPFAM" id="SSF55068">
    <property type="entry name" value="Peptide methionine sulfoxide reductase"/>
    <property type="match status" value="1"/>
</dbReference>
<gene>
    <name evidence="1" type="primary">msrA</name>
    <name type="ordered locus">SSON_4404</name>
</gene>
<sequence>MSLFDKKHLVSPADALPGRNTPMPVATLHAVNGHSMTNVPDGMEIAIFAMGCFWGVERLFWQLPGVYSTAAGYTGGYTPNPTYREVCSGDTGHAEAVRIVYDPSVISYEQLLQVFWENHDPAQGMRQGNDHGTQYRSAIYPLTPEQDAAARASLERFQAAMLAADDDRHITTEIANATPFYYAEDDHQQYLHKNPYGYCGIGGIGVCLPPEA</sequence>
<proteinExistence type="inferred from homology"/>
<accession>Q3YUC8</accession>
<keyword id="KW-0560">Oxidoreductase</keyword>
<keyword id="KW-1185">Reference proteome</keyword>
<evidence type="ECO:0000255" key="1">
    <source>
        <dbReference type="HAMAP-Rule" id="MF_01401"/>
    </source>
</evidence>